<feature type="chain" id="PRO_1000043184" description="3-dehydroquinate dehydratase">
    <location>
        <begin position="1"/>
        <end position="252"/>
    </location>
</feature>
<feature type="active site" description="Proton donor/acceptor" evidence="1">
    <location>
        <position position="143"/>
    </location>
</feature>
<feature type="active site" description="Schiff-base intermediate with substrate" evidence="1">
    <location>
        <position position="170"/>
    </location>
</feature>
<feature type="binding site" evidence="1">
    <location>
        <position position="21"/>
    </location>
    <ligand>
        <name>3-dehydroquinate</name>
        <dbReference type="ChEBI" id="CHEBI:32364"/>
    </ligand>
</feature>
<feature type="binding site" evidence="1">
    <location>
        <begin position="46"/>
        <end position="48"/>
    </location>
    <ligand>
        <name>3-dehydroquinate</name>
        <dbReference type="ChEBI" id="CHEBI:32364"/>
    </ligand>
</feature>
<feature type="binding site" evidence="1">
    <location>
        <position position="82"/>
    </location>
    <ligand>
        <name>3-dehydroquinate</name>
        <dbReference type="ChEBI" id="CHEBI:32364"/>
    </ligand>
</feature>
<feature type="binding site" evidence="1">
    <location>
        <position position="213"/>
    </location>
    <ligand>
        <name>3-dehydroquinate</name>
        <dbReference type="ChEBI" id="CHEBI:32364"/>
    </ligand>
</feature>
<feature type="binding site" evidence="1">
    <location>
        <position position="232"/>
    </location>
    <ligand>
        <name>3-dehydroquinate</name>
        <dbReference type="ChEBI" id="CHEBI:32364"/>
    </ligand>
</feature>
<feature type="binding site" evidence="1">
    <location>
        <position position="236"/>
    </location>
    <ligand>
        <name>3-dehydroquinate</name>
        <dbReference type="ChEBI" id="CHEBI:32364"/>
    </ligand>
</feature>
<evidence type="ECO:0000255" key="1">
    <source>
        <dbReference type="HAMAP-Rule" id="MF_00214"/>
    </source>
</evidence>
<comment type="function">
    <text evidence="1">Involved in the third step of the chorismate pathway, which leads to the biosynthesis of aromatic amino acids. Catalyzes the cis-dehydration of 3-dehydroquinate (DHQ) and introduces the first double bond of the aromatic ring to yield 3-dehydroshikimate.</text>
</comment>
<comment type="catalytic activity">
    <reaction evidence="1">
        <text>3-dehydroquinate = 3-dehydroshikimate + H2O</text>
        <dbReference type="Rhea" id="RHEA:21096"/>
        <dbReference type="ChEBI" id="CHEBI:15377"/>
        <dbReference type="ChEBI" id="CHEBI:16630"/>
        <dbReference type="ChEBI" id="CHEBI:32364"/>
        <dbReference type="EC" id="4.2.1.10"/>
    </reaction>
</comment>
<comment type="pathway">
    <text evidence="1">Metabolic intermediate biosynthesis; chorismate biosynthesis; chorismate from D-erythrose 4-phosphate and phosphoenolpyruvate: step 3/7.</text>
</comment>
<comment type="subunit">
    <text evidence="1">Homodimer.</text>
</comment>
<comment type="similarity">
    <text evidence="1">Belongs to the type-I 3-dehydroquinase family.</text>
</comment>
<keyword id="KW-0028">Amino-acid biosynthesis</keyword>
<keyword id="KW-0057">Aromatic amino acid biosynthesis</keyword>
<keyword id="KW-0456">Lyase</keyword>
<keyword id="KW-1185">Reference proteome</keyword>
<keyword id="KW-0704">Schiff base</keyword>
<name>AROD_SHISS</name>
<protein>
    <recommendedName>
        <fullName evidence="1">3-dehydroquinate dehydratase</fullName>
        <shortName evidence="1">3-dehydroquinase</shortName>
        <ecNumber evidence="1">4.2.1.10</ecNumber>
    </recommendedName>
    <alternativeName>
        <fullName evidence="1">Type I DHQase</fullName>
    </alternativeName>
    <alternativeName>
        <fullName evidence="1">Type I dehydroquinase</fullName>
        <shortName evidence="1">DHQ1</shortName>
    </alternativeName>
</protein>
<gene>
    <name evidence="1" type="primary">aroD</name>
    <name type="ordered locus">SSON_1461</name>
</gene>
<dbReference type="EC" id="4.2.1.10" evidence="1"/>
<dbReference type="EMBL" id="CP000038">
    <property type="protein sequence ID" value="AAZ88165.1"/>
    <property type="molecule type" value="Genomic_DNA"/>
</dbReference>
<dbReference type="RefSeq" id="WP_000860166.1">
    <property type="nucleotide sequence ID" value="NC_007384.1"/>
</dbReference>
<dbReference type="SMR" id="Q3Z247"/>
<dbReference type="GeneID" id="93775850"/>
<dbReference type="KEGG" id="ssn:SSON_1461"/>
<dbReference type="HOGENOM" id="CLU_064444_0_0_6"/>
<dbReference type="UniPathway" id="UPA00053">
    <property type="reaction ID" value="UER00086"/>
</dbReference>
<dbReference type="Proteomes" id="UP000002529">
    <property type="component" value="Chromosome"/>
</dbReference>
<dbReference type="GO" id="GO:0003855">
    <property type="term" value="F:3-dehydroquinate dehydratase activity"/>
    <property type="evidence" value="ECO:0007669"/>
    <property type="project" value="UniProtKB-UniRule"/>
</dbReference>
<dbReference type="GO" id="GO:0046279">
    <property type="term" value="P:3,4-dihydroxybenzoate biosynthetic process"/>
    <property type="evidence" value="ECO:0007669"/>
    <property type="project" value="TreeGrafter"/>
</dbReference>
<dbReference type="GO" id="GO:0008652">
    <property type="term" value="P:amino acid biosynthetic process"/>
    <property type="evidence" value="ECO:0007669"/>
    <property type="project" value="UniProtKB-KW"/>
</dbReference>
<dbReference type="GO" id="GO:0009073">
    <property type="term" value="P:aromatic amino acid family biosynthetic process"/>
    <property type="evidence" value="ECO:0007669"/>
    <property type="project" value="UniProtKB-KW"/>
</dbReference>
<dbReference type="GO" id="GO:0009423">
    <property type="term" value="P:chorismate biosynthetic process"/>
    <property type="evidence" value="ECO:0007669"/>
    <property type="project" value="UniProtKB-UniRule"/>
</dbReference>
<dbReference type="CDD" id="cd00502">
    <property type="entry name" value="DHQase_I"/>
    <property type="match status" value="1"/>
</dbReference>
<dbReference type="FunFam" id="3.20.20.70:FF:000047">
    <property type="entry name" value="3-dehydroquinate dehydratase"/>
    <property type="match status" value="1"/>
</dbReference>
<dbReference type="Gene3D" id="3.20.20.70">
    <property type="entry name" value="Aldolase class I"/>
    <property type="match status" value="1"/>
</dbReference>
<dbReference type="HAMAP" id="MF_00214">
    <property type="entry name" value="AroD"/>
    <property type="match status" value="1"/>
</dbReference>
<dbReference type="InterPro" id="IPR018508">
    <property type="entry name" value="3-dehydroquinate_DH_AS"/>
</dbReference>
<dbReference type="InterPro" id="IPR013785">
    <property type="entry name" value="Aldolase_TIM"/>
</dbReference>
<dbReference type="InterPro" id="IPR001381">
    <property type="entry name" value="DHquinase_I"/>
</dbReference>
<dbReference type="InterPro" id="IPR050146">
    <property type="entry name" value="Type-I_3-dehydroquinase"/>
</dbReference>
<dbReference type="NCBIfam" id="TIGR01093">
    <property type="entry name" value="aroD"/>
    <property type="match status" value="1"/>
</dbReference>
<dbReference type="PANTHER" id="PTHR43699">
    <property type="entry name" value="3-DEHYDROQUINATE DEHYDRATASE"/>
    <property type="match status" value="1"/>
</dbReference>
<dbReference type="PANTHER" id="PTHR43699:SF1">
    <property type="entry name" value="3-DEHYDROQUINATE DEHYDRATASE"/>
    <property type="match status" value="1"/>
</dbReference>
<dbReference type="Pfam" id="PF01487">
    <property type="entry name" value="DHquinase_I"/>
    <property type="match status" value="1"/>
</dbReference>
<dbReference type="SUPFAM" id="SSF51569">
    <property type="entry name" value="Aldolase"/>
    <property type="match status" value="1"/>
</dbReference>
<dbReference type="PROSITE" id="PS01028">
    <property type="entry name" value="DEHYDROQUINASE_I"/>
    <property type="match status" value="1"/>
</dbReference>
<accession>Q3Z247</accession>
<proteinExistence type="inferred from homology"/>
<sequence length="252" mass="27520">MKTVTVKDLVIGAGAPKIIVSLMAKDIARVKSEALAYREADFDILEWRVDHFADLSNVESVMAAAKILRETMPEKPLLFTFRSAKEGGEQAISTEAYIALNRAAIDSGLVDMIDLELFTGDDQVKETVAYAHAHDVKVVMSNHDFHKTPEAEEIIARLRKMQSFDADIPKIALMPQSTSDVLTLLTATLEMQEQYADRPIITMSMAKTGVISRLAGEVFGSAATFGAVKKASAPGQISVNDLRTVLTILHQA</sequence>
<organism>
    <name type="scientific">Shigella sonnei (strain Ss046)</name>
    <dbReference type="NCBI Taxonomy" id="300269"/>
    <lineage>
        <taxon>Bacteria</taxon>
        <taxon>Pseudomonadati</taxon>
        <taxon>Pseudomonadota</taxon>
        <taxon>Gammaproteobacteria</taxon>
        <taxon>Enterobacterales</taxon>
        <taxon>Enterobacteriaceae</taxon>
        <taxon>Shigella</taxon>
    </lineage>
</organism>
<reference key="1">
    <citation type="journal article" date="2005" name="Nucleic Acids Res.">
        <title>Genome dynamics and diversity of Shigella species, the etiologic agents of bacillary dysentery.</title>
        <authorList>
            <person name="Yang F."/>
            <person name="Yang J."/>
            <person name="Zhang X."/>
            <person name="Chen L."/>
            <person name="Jiang Y."/>
            <person name="Yan Y."/>
            <person name="Tang X."/>
            <person name="Wang J."/>
            <person name="Xiong Z."/>
            <person name="Dong J."/>
            <person name="Xue Y."/>
            <person name="Zhu Y."/>
            <person name="Xu X."/>
            <person name="Sun L."/>
            <person name="Chen S."/>
            <person name="Nie H."/>
            <person name="Peng J."/>
            <person name="Xu J."/>
            <person name="Wang Y."/>
            <person name="Yuan Z."/>
            <person name="Wen Y."/>
            <person name="Yao Z."/>
            <person name="Shen Y."/>
            <person name="Qiang B."/>
            <person name="Hou Y."/>
            <person name="Yu J."/>
            <person name="Jin Q."/>
        </authorList>
    </citation>
    <scope>NUCLEOTIDE SEQUENCE [LARGE SCALE GENOMIC DNA]</scope>
    <source>
        <strain>Ss046</strain>
    </source>
</reference>